<accession>P75291</accession>
<sequence>MLNKIKLQQKRKLIIGWSVFALINLVVILLTVLLRAGLPNLVSKGVTPFSAQAFGDAFIFLITRVYLDNFLRQPALLLGVITLIGYLALGRGGVQSVVGALKTVIGFILLSIGSGVLVSTARPVFDTIKGLGGTGVVLLDPYFSLASANDFFTNSFLNNDYVSLIAFSLLVGFIVNIIFVGLKRWTNTNSIMVTGHVMLQQAAVVTTLFYIVLFRQIPLLGTGIAYGAQAGLVIISGIFLGVYWSTASTGTYLVTNKVTNNAGFSIGHQQMLGIMTVAKLGKYFGDKNDSAEHKKLPKALKIFEDNIFTQTIIILSLFVVLFIVILASYKGDKPLLINWDKFGAINGLEIWNTTFGGANFTLNIIGGALKMVASLIAIMTGVRMFITELQQAFQGISEKVVPGAVVAVDIAAVYGFSINSVTFGFLSGVIGQFLAVAIMAGISYIPGNQFSFVAIPLFITLFFNSGAFGVYANAEGGWKAALLLPGIIGFLEIIVISFALRTVSNAYQASALLDAKQSFDLKALMGNSLDNNNGSALKTAVEKVVNATGVNRITEAQSFVKSDSFNSLKAVNSTLAQAIEWISKSASPVDNGFIGMADWNLYFGLLVWIGAYNVIGGWILVILATVGLILLAQIIDNGKQTKVTKLQQLLKINPQLDLNN</sequence>
<name>ULAA_MYCPN</name>
<feature type="chain" id="PRO_0000097715" description="Ascorbate-specific PTS system EIIC component">
    <location>
        <begin position="1"/>
        <end position="660"/>
    </location>
</feature>
<feature type="transmembrane region" description="Helical" evidence="2">
    <location>
        <begin position="14"/>
        <end position="34"/>
    </location>
</feature>
<feature type="transmembrane region" description="Helical" evidence="2">
    <location>
        <begin position="74"/>
        <end position="94"/>
    </location>
</feature>
<feature type="transmembrane region" description="Helical" evidence="2">
    <location>
        <begin position="98"/>
        <end position="118"/>
    </location>
</feature>
<feature type="transmembrane region" description="Helical" evidence="2">
    <location>
        <begin position="162"/>
        <end position="182"/>
    </location>
</feature>
<feature type="transmembrane region" description="Helical" evidence="2">
    <location>
        <begin position="194"/>
        <end position="214"/>
    </location>
</feature>
<feature type="transmembrane region" description="Helical" evidence="2">
    <location>
        <begin position="224"/>
        <end position="244"/>
    </location>
</feature>
<feature type="transmembrane region" description="Helical" evidence="2">
    <location>
        <begin position="307"/>
        <end position="327"/>
    </location>
</feature>
<feature type="transmembrane region" description="Helical" evidence="2">
    <location>
        <begin position="362"/>
        <end position="382"/>
    </location>
</feature>
<feature type="transmembrane region" description="Helical" evidence="2">
    <location>
        <begin position="401"/>
        <end position="421"/>
    </location>
</feature>
<feature type="transmembrane region" description="Helical" evidence="2">
    <location>
        <begin position="422"/>
        <end position="442"/>
    </location>
</feature>
<feature type="transmembrane region" description="Helical" evidence="2">
    <location>
        <begin position="450"/>
        <end position="470"/>
    </location>
</feature>
<feature type="transmembrane region" description="Helical" evidence="2">
    <location>
        <begin position="592"/>
        <end position="612"/>
    </location>
</feature>
<feature type="transmembrane region" description="Helical" evidence="2">
    <location>
        <begin position="615"/>
        <end position="635"/>
    </location>
</feature>
<feature type="binding site" evidence="1">
    <location>
        <begin position="141"/>
        <end position="142"/>
    </location>
    <ligand>
        <name>L-ascorbate</name>
        <dbReference type="ChEBI" id="CHEBI:38290"/>
    </ligand>
</feature>
<feature type="binding site" evidence="1">
    <location>
        <begin position="196"/>
        <end position="200"/>
    </location>
    <ligand>
        <name>L-ascorbate</name>
        <dbReference type="ChEBI" id="CHEBI:38290"/>
    </ligand>
</feature>
<feature type="binding site" evidence="1">
    <location>
        <begin position="268"/>
        <end position="269"/>
    </location>
    <ligand>
        <name>L-ascorbate</name>
        <dbReference type="ChEBI" id="CHEBI:38290"/>
    </ligand>
</feature>
<feature type="binding site" evidence="1">
    <location>
        <position position="409"/>
    </location>
    <ligand>
        <name>L-ascorbate</name>
        <dbReference type="ChEBI" id="CHEBI:38290"/>
    </ligand>
</feature>
<protein>
    <recommendedName>
        <fullName evidence="1">Ascorbate-specific PTS system EIIC component</fullName>
    </recommendedName>
    <alternativeName>
        <fullName evidence="1">Ascorbate-specific permease IIC component UlaA</fullName>
    </alternativeName>
</protein>
<reference key="1">
    <citation type="journal article" date="1996" name="Nucleic Acids Res.">
        <title>Complete sequence analysis of the genome of the bacterium Mycoplasma pneumoniae.</title>
        <authorList>
            <person name="Himmelreich R."/>
            <person name="Hilbert H."/>
            <person name="Plagens H."/>
            <person name="Pirkl E."/>
            <person name="Li B.-C."/>
            <person name="Herrmann R."/>
        </authorList>
    </citation>
    <scope>NUCLEOTIDE SEQUENCE [LARGE SCALE GENOMIC DNA]</scope>
    <source>
        <strain>ATCC 29342 / M129 / Subtype 1</strain>
    </source>
</reference>
<keyword id="KW-1003">Cell membrane</keyword>
<keyword id="KW-0472">Membrane</keyword>
<keyword id="KW-0598">Phosphotransferase system</keyword>
<keyword id="KW-1185">Reference proteome</keyword>
<keyword id="KW-0762">Sugar transport</keyword>
<keyword id="KW-0812">Transmembrane</keyword>
<keyword id="KW-1133">Transmembrane helix</keyword>
<keyword id="KW-0813">Transport</keyword>
<organism>
    <name type="scientific">Mycoplasma pneumoniae (strain ATCC 29342 / M129 / Subtype 1)</name>
    <name type="common">Mycoplasmoides pneumoniae</name>
    <dbReference type="NCBI Taxonomy" id="272634"/>
    <lineage>
        <taxon>Bacteria</taxon>
        <taxon>Bacillati</taxon>
        <taxon>Mycoplasmatota</taxon>
        <taxon>Mycoplasmoidales</taxon>
        <taxon>Mycoplasmoidaceae</taxon>
        <taxon>Mycoplasmoides</taxon>
    </lineage>
</organism>
<dbReference type="EMBL" id="U00089">
    <property type="protein sequence ID" value="AAB95995.1"/>
    <property type="molecule type" value="Genomic_DNA"/>
</dbReference>
<dbReference type="PIR" id="S73673">
    <property type="entry name" value="S73673"/>
</dbReference>
<dbReference type="RefSeq" id="NP_110184.1">
    <property type="nucleotide sequence ID" value="NC_000912.1"/>
</dbReference>
<dbReference type="RefSeq" id="WP_010874852.1">
    <property type="nucleotide sequence ID" value="NZ_OU342337.1"/>
</dbReference>
<dbReference type="SMR" id="P75291"/>
<dbReference type="STRING" id="272634.MPN_496"/>
<dbReference type="EnsemblBacteria" id="AAB95995">
    <property type="protein sequence ID" value="AAB95995"/>
    <property type="gene ID" value="MPN_496"/>
</dbReference>
<dbReference type="KEGG" id="mpn:MPN_496"/>
<dbReference type="PATRIC" id="fig|272634.6.peg.536"/>
<dbReference type="HOGENOM" id="CLU_031784_1_2_14"/>
<dbReference type="OrthoDB" id="9796178at2"/>
<dbReference type="BioCyc" id="MPNE272634:G1GJ3-813-MONOMER"/>
<dbReference type="Proteomes" id="UP000000808">
    <property type="component" value="Chromosome"/>
</dbReference>
<dbReference type="GO" id="GO:0005886">
    <property type="term" value="C:plasma membrane"/>
    <property type="evidence" value="ECO:0007669"/>
    <property type="project" value="UniProtKB-SubCell"/>
</dbReference>
<dbReference type="GO" id="GO:0009401">
    <property type="term" value="P:phosphoenolpyruvate-dependent sugar phosphotransferase system"/>
    <property type="evidence" value="ECO:0007669"/>
    <property type="project" value="UniProtKB-KW"/>
</dbReference>
<dbReference type="InterPro" id="IPR051562">
    <property type="entry name" value="Ascorbate-PTS_EIIC"/>
</dbReference>
<dbReference type="InterPro" id="IPR004703">
    <property type="entry name" value="PTS_sugar-sp_permease"/>
</dbReference>
<dbReference type="NCBIfam" id="NF006925">
    <property type="entry name" value="PRK09410.2-3"/>
    <property type="match status" value="1"/>
</dbReference>
<dbReference type="PANTHER" id="PTHR33843">
    <property type="entry name" value="ASCORBATE-SPECIFIC PTS SYSTEM EIIC COMPONENT"/>
    <property type="match status" value="1"/>
</dbReference>
<dbReference type="PANTHER" id="PTHR33843:SF4">
    <property type="entry name" value="ASCORBATE-SPECIFIC PTS SYSTEM EIIC COMPONENT"/>
    <property type="match status" value="1"/>
</dbReference>
<dbReference type="Pfam" id="PF03611">
    <property type="entry name" value="EIIC-GAT"/>
    <property type="match status" value="1"/>
</dbReference>
<gene>
    <name type="primary">ulaA</name>
    <name type="synonym">sgaT</name>
    <name type="ordered locus">MPN_496</name>
    <name type="ORF">MP347</name>
</gene>
<proteinExistence type="inferred from homology"/>
<evidence type="ECO:0000250" key="1">
    <source>
        <dbReference type="UniProtKB" id="P39301"/>
    </source>
</evidence>
<evidence type="ECO:0000255" key="2"/>
<evidence type="ECO:0000305" key="3"/>
<comment type="function">
    <text evidence="1">The phosphoenolpyruvate-dependent sugar phosphotransferase system (sugar PTS), a major carbohydrate active transport system, catalyzes the phosphorylation of incoming sugar substrates concomitantly with their translocation across the cell membrane. The enzyme II UlaABC PTS system is involved in ascorbate transport.</text>
</comment>
<comment type="subunit">
    <text evidence="1">Homodimer.</text>
</comment>
<comment type="subcellular location">
    <subcellularLocation>
        <location evidence="3">Cell membrane</location>
        <topology evidence="3">Multi-pass membrane protein</topology>
    </subcellularLocation>
</comment>
<comment type="domain">
    <text evidence="1">In classical PTS systems, the PTS EIIC type-2 domain forms the translocation channel and contains the specific substrate-binding site. UlaA does not exhibit the topological features of any recognized enzyme IIC.</text>
</comment>
<comment type="similarity">
    <text evidence="3">Belongs to the UlaA family.</text>
</comment>